<proteinExistence type="inferred from homology"/>
<gene>
    <name evidence="1" type="primary">queF</name>
    <name type="ordered locus">ABSDF1213</name>
</gene>
<reference key="1">
    <citation type="journal article" date="2008" name="PLoS ONE">
        <title>Comparative analysis of Acinetobacters: three genomes for three lifestyles.</title>
        <authorList>
            <person name="Vallenet D."/>
            <person name="Nordmann P."/>
            <person name="Barbe V."/>
            <person name="Poirel L."/>
            <person name="Mangenot S."/>
            <person name="Bataille E."/>
            <person name="Dossat C."/>
            <person name="Gas S."/>
            <person name="Kreimeyer A."/>
            <person name="Lenoble P."/>
            <person name="Oztas S."/>
            <person name="Poulain J."/>
            <person name="Segurens B."/>
            <person name="Robert C."/>
            <person name="Abergel C."/>
            <person name="Claverie J.-M."/>
            <person name="Raoult D."/>
            <person name="Medigue C."/>
            <person name="Weissenbach J."/>
            <person name="Cruveiller S."/>
        </authorList>
    </citation>
    <scope>NUCLEOTIDE SEQUENCE [LARGE SCALE GENOMIC DNA]</scope>
    <source>
        <strain>SDF</strain>
    </source>
</reference>
<comment type="function">
    <text evidence="1">Catalyzes the NADPH-dependent reduction of 7-cyano-7-deazaguanine (preQ0) to 7-aminomethyl-7-deazaguanine (preQ1).</text>
</comment>
<comment type="catalytic activity">
    <reaction evidence="1">
        <text>7-aminomethyl-7-carbaguanine + 2 NADP(+) = 7-cyano-7-deazaguanine + 2 NADPH + 3 H(+)</text>
        <dbReference type="Rhea" id="RHEA:13409"/>
        <dbReference type="ChEBI" id="CHEBI:15378"/>
        <dbReference type="ChEBI" id="CHEBI:45075"/>
        <dbReference type="ChEBI" id="CHEBI:57783"/>
        <dbReference type="ChEBI" id="CHEBI:58349"/>
        <dbReference type="ChEBI" id="CHEBI:58703"/>
        <dbReference type="EC" id="1.7.1.13"/>
    </reaction>
</comment>
<comment type="pathway">
    <text evidence="1">tRNA modification; tRNA-queuosine biosynthesis.</text>
</comment>
<comment type="subunit">
    <text evidence="1">Homodimer.</text>
</comment>
<comment type="subcellular location">
    <subcellularLocation>
        <location evidence="1">Cytoplasm</location>
    </subcellularLocation>
</comment>
<comment type="similarity">
    <text evidence="1">Belongs to the GTP cyclohydrolase I family. QueF type 2 subfamily.</text>
</comment>
<sequence>MSVEQSLLGKETQYPTSYQPDVLFPIARAQSREKYAHIQGITQGKDWWHVFEISWLNAHGIPQVAIGRITLPASSPNLIESKSLKLYFNSLNFTQFDSTQSFIETVEKDLSAAAGAKVELTLFQVDDLETSKPQGICIDDLMPERLEQHPDATLLKLDESGEEIEVELYSHLLRSNCPVTSQPDWGTVFIRFKGKKPCYRSLLAYIISYRQHNGFHEQCVEQIFADIWQNLQPEKLMVYATYTRRGGLDINPCRVSDLTWMPKPIRLARQ</sequence>
<organism>
    <name type="scientific">Acinetobacter baumannii (strain SDF)</name>
    <dbReference type="NCBI Taxonomy" id="509170"/>
    <lineage>
        <taxon>Bacteria</taxon>
        <taxon>Pseudomonadati</taxon>
        <taxon>Pseudomonadota</taxon>
        <taxon>Gammaproteobacteria</taxon>
        <taxon>Moraxellales</taxon>
        <taxon>Moraxellaceae</taxon>
        <taxon>Acinetobacter</taxon>
        <taxon>Acinetobacter calcoaceticus/baumannii complex</taxon>
    </lineage>
</organism>
<accession>B0VUX1</accession>
<evidence type="ECO:0000255" key="1">
    <source>
        <dbReference type="HAMAP-Rule" id="MF_00817"/>
    </source>
</evidence>
<name>QUEF_ACIBS</name>
<feature type="chain" id="PRO_1000193208" description="NADPH-dependent 7-cyano-7-deazaguanine reductase">
    <location>
        <begin position="1"/>
        <end position="270"/>
    </location>
</feature>
<feature type="active site" description="Thioimide intermediate" evidence="1">
    <location>
        <position position="177"/>
    </location>
</feature>
<feature type="active site" description="Proton donor" evidence="1">
    <location>
        <position position="184"/>
    </location>
</feature>
<feature type="binding site" evidence="1">
    <location>
        <begin position="79"/>
        <end position="81"/>
    </location>
    <ligand>
        <name>substrate</name>
    </ligand>
</feature>
<feature type="binding site" evidence="1">
    <location>
        <begin position="81"/>
        <end position="82"/>
    </location>
    <ligand>
        <name>NADPH</name>
        <dbReference type="ChEBI" id="CHEBI:57783"/>
    </ligand>
</feature>
<feature type="binding site" evidence="1">
    <location>
        <begin position="216"/>
        <end position="217"/>
    </location>
    <ligand>
        <name>substrate</name>
    </ligand>
</feature>
<feature type="binding site" evidence="1">
    <location>
        <begin position="245"/>
        <end position="246"/>
    </location>
    <ligand>
        <name>NADPH</name>
        <dbReference type="ChEBI" id="CHEBI:57783"/>
    </ligand>
</feature>
<dbReference type="EC" id="1.7.1.13" evidence="1"/>
<dbReference type="EMBL" id="CU468230">
    <property type="protein sequence ID" value="CAP00563.1"/>
    <property type="molecule type" value="Genomic_DNA"/>
</dbReference>
<dbReference type="SMR" id="B0VUX1"/>
<dbReference type="KEGG" id="abm:ABSDF1213"/>
<dbReference type="HOGENOM" id="CLU_054738_0_0_6"/>
<dbReference type="UniPathway" id="UPA00392"/>
<dbReference type="Proteomes" id="UP000001741">
    <property type="component" value="Chromosome"/>
</dbReference>
<dbReference type="GO" id="GO:0005737">
    <property type="term" value="C:cytoplasm"/>
    <property type="evidence" value="ECO:0007669"/>
    <property type="project" value="UniProtKB-SubCell"/>
</dbReference>
<dbReference type="GO" id="GO:0033739">
    <property type="term" value="F:preQ1 synthase activity"/>
    <property type="evidence" value="ECO:0007669"/>
    <property type="project" value="UniProtKB-UniRule"/>
</dbReference>
<dbReference type="GO" id="GO:0008616">
    <property type="term" value="P:queuosine biosynthetic process"/>
    <property type="evidence" value="ECO:0007669"/>
    <property type="project" value="UniProtKB-UniRule"/>
</dbReference>
<dbReference type="GO" id="GO:0006400">
    <property type="term" value="P:tRNA modification"/>
    <property type="evidence" value="ECO:0007669"/>
    <property type="project" value="UniProtKB-UniRule"/>
</dbReference>
<dbReference type="Gene3D" id="3.30.1130.10">
    <property type="match status" value="2"/>
</dbReference>
<dbReference type="HAMAP" id="MF_00817">
    <property type="entry name" value="QueF_type2"/>
    <property type="match status" value="1"/>
</dbReference>
<dbReference type="InterPro" id="IPR043133">
    <property type="entry name" value="GTP-CH-I_C/QueF"/>
</dbReference>
<dbReference type="InterPro" id="IPR050084">
    <property type="entry name" value="NADPH_dep_7-cyano-7-deazaG_red"/>
</dbReference>
<dbReference type="InterPro" id="IPR029500">
    <property type="entry name" value="QueF"/>
</dbReference>
<dbReference type="InterPro" id="IPR029139">
    <property type="entry name" value="QueF_N"/>
</dbReference>
<dbReference type="InterPro" id="IPR016428">
    <property type="entry name" value="QueF_type2"/>
</dbReference>
<dbReference type="NCBIfam" id="TIGR03138">
    <property type="entry name" value="QueF"/>
    <property type="match status" value="1"/>
</dbReference>
<dbReference type="PANTHER" id="PTHR34354">
    <property type="entry name" value="NADPH-DEPENDENT 7-CYANO-7-DEAZAGUANINE REDUCTASE"/>
    <property type="match status" value="1"/>
</dbReference>
<dbReference type="PANTHER" id="PTHR34354:SF1">
    <property type="entry name" value="NADPH-DEPENDENT 7-CYANO-7-DEAZAGUANINE REDUCTASE"/>
    <property type="match status" value="1"/>
</dbReference>
<dbReference type="Pfam" id="PF14489">
    <property type="entry name" value="QueF"/>
    <property type="match status" value="1"/>
</dbReference>
<dbReference type="Pfam" id="PF14819">
    <property type="entry name" value="QueF_N"/>
    <property type="match status" value="1"/>
</dbReference>
<dbReference type="PIRSF" id="PIRSF004750">
    <property type="entry name" value="Nitrile_oxidored_YqcD_prd"/>
    <property type="match status" value="1"/>
</dbReference>
<dbReference type="SUPFAM" id="SSF55620">
    <property type="entry name" value="Tetrahydrobiopterin biosynthesis enzymes-like"/>
    <property type="match status" value="1"/>
</dbReference>
<keyword id="KW-0963">Cytoplasm</keyword>
<keyword id="KW-0521">NADP</keyword>
<keyword id="KW-0560">Oxidoreductase</keyword>
<keyword id="KW-0671">Queuosine biosynthesis</keyword>
<protein>
    <recommendedName>
        <fullName evidence="1">NADPH-dependent 7-cyano-7-deazaguanine reductase</fullName>
        <ecNumber evidence="1">1.7.1.13</ecNumber>
    </recommendedName>
    <alternativeName>
        <fullName evidence="1">7-cyano-7-carbaguanine reductase</fullName>
    </alternativeName>
    <alternativeName>
        <fullName evidence="1">NADPH-dependent nitrile oxidoreductase</fullName>
    </alternativeName>
    <alternativeName>
        <fullName evidence="1">PreQ(0) reductase</fullName>
    </alternativeName>
</protein>